<name>Y375_LYSSC</name>
<protein>
    <recommendedName>
        <fullName evidence="1">UPF0342 protein Bsph_0375</fullName>
    </recommendedName>
</protein>
<organism>
    <name type="scientific">Lysinibacillus sphaericus (strain C3-41)</name>
    <dbReference type="NCBI Taxonomy" id="444177"/>
    <lineage>
        <taxon>Bacteria</taxon>
        <taxon>Bacillati</taxon>
        <taxon>Bacillota</taxon>
        <taxon>Bacilli</taxon>
        <taxon>Bacillales</taxon>
        <taxon>Bacillaceae</taxon>
        <taxon>Lysinibacillus</taxon>
    </lineage>
</organism>
<sequence>MVNIYNDINALEATFRKTPEFEALQAAVEVVKSDEEALNVFKNFRKIQIELQKKQLAGEELLEDELVYAQKASQLVQQNEKISAMLEAEMKLSKVIEEVNRILIKPIQGLYEDIQ</sequence>
<comment type="similarity">
    <text evidence="1">Belongs to the UPF0342 family.</text>
</comment>
<feature type="chain" id="PRO_1000198527" description="UPF0342 protein Bsph_0375">
    <location>
        <begin position="1"/>
        <end position="115"/>
    </location>
</feature>
<accession>B1HVI3</accession>
<gene>
    <name type="ordered locus">Bsph_0375</name>
</gene>
<proteinExistence type="inferred from homology"/>
<dbReference type="EMBL" id="CP000817">
    <property type="protein sequence ID" value="ACA38002.1"/>
    <property type="molecule type" value="Genomic_DNA"/>
</dbReference>
<dbReference type="RefSeq" id="WP_012292161.1">
    <property type="nucleotide sequence ID" value="NC_010382.1"/>
</dbReference>
<dbReference type="SMR" id="B1HVI3"/>
<dbReference type="EnsemblBacteria" id="ACA38002">
    <property type="protein sequence ID" value="ACA38002"/>
    <property type="gene ID" value="Bsph_0375"/>
</dbReference>
<dbReference type="KEGG" id="lsp:Bsph_0375"/>
<dbReference type="HOGENOM" id="CLU_140243_3_0_9"/>
<dbReference type="Proteomes" id="UP000002164">
    <property type="component" value="Chromosome"/>
</dbReference>
<dbReference type="Gene3D" id="1.20.1500.10">
    <property type="entry name" value="YheA/YmcA-like"/>
    <property type="match status" value="1"/>
</dbReference>
<dbReference type="HAMAP" id="MF_01526">
    <property type="entry name" value="UPF0342"/>
    <property type="match status" value="1"/>
</dbReference>
<dbReference type="InterPro" id="IPR010368">
    <property type="entry name" value="Com_YlbF"/>
</dbReference>
<dbReference type="InterPro" id="IPR023378">
    <property type="entry name" value="YheA/YmcA-like_dom_sf"/>
</dbReference>
<dbReference type="Pfam" id="PF06133">
    <property type="entry name" value="Com_YlbF"/>
    <property type="match status" value="1"/>
</dbReference>
<dbReference type="SUPFAM" id="SSF158622">
    <property type="entry name" value="YheA/YmcA-like"/>
    <property type="match status" value="1"/>
</dbReference>
<reference key="1">
    <citation type="journal article" date="2008" name="J. Bacteriol.">
        <title>Complete genome sequence of the mosquitocidal bacterium Bacillus sphaericus C3-41 and comparison with those of closely related Bacillus species.</title>
        <authorList>
            <person name="Hu X."/>
            <person name="Fan W."/>
            <person name="Han B."/>
            <person name="Liu H."/>
            <person name="Zheng D."/>
            <person name="Li Q."/>
            <person name="Dong W."/>
            <person name="Yan J."/>
            <person name="Gao M."/>
            <person name="Berry C."/>
            <person name="Yuan Z."/>
        </authorList>
    </citation>
    <scope>NUCLEOTIDE SEQUENCE [LARGE SCALE GENOMIC DNA]</scope>
    <source>
        <strain>C3-41</strain>
    </source>
</reference>
<evidence type="ECO:0000255" key="1">
    <source>
        <dbReference type="HAMAP-Rule" id="MF_01526"/>
    </source>
</evidence>